<gene>
    <name type="ordered locus">Npun_R2068</name>
</gene>
<accession>B2J528</accession>
<reference key="1">
    <citation type="journal article" date="2013" name="Plant Physiol.">
        <title>A Nostoc punctiforme Sugar Transporter Necessary to Establish a Cyanobacterium-Plant Symbiosis.</title>
        <authorList>
            <person name="Ekman M."/>
            <person name="Picossi S."/>
            <person name="Campbell E.L."/>
            <person name="Meeks J.C."/>
            <person name="Flores E."/>
        </authorList>
    </citation>
    <scope>NUCLEOTIDE SEQUENCE [LARGE SCALE GENOMIC DNA]</scope>
    <source>
        <strain>ATCC 29133 / PCC 73102</strain>
    </source>
</reference>
<reference key="2">
    <citation type="journal article" date="2007" name="Biochemistry">
        <title>Discovery of two cyanobacterial phenylalanine ammonia lyases: kinetic and structural characterization.</title>
        <authorList>
            <person name="Moffitt M.C."/>
            <person name="Louie G.V."/>
            <person name="Bowman M.E."/>
            <person name="Pence J."/>
            <person name="Noel J.P."/>
            <person name="Moore B.S."/>
        </authorList>
    </citation>
    <scope>X-RAY CRYSTALLOGRAPHY (2.50 ANGSTROMS)</scope>
    <scope>FUNCTION</scope>
    <scope>CATALYTIC ACTIVITY</scope>
    <scope>SUBUNIT</scope>
    <scope>BIOPHYSICOCHEMICAL PROPERTIES</scope>
    <scope>PTM</scope>
    <scope>DEHYDRATION AT SER-168</scope>
</reference>
<keyword id="KW-0002">3D-structure</keyword>
<keyword id="KW-0963">Cytoplasm</keyword>
<keyword id="KW-0456">Lyase</keyword>
<keyword id="KW-0585">Phenylalanine catabolism</keyword>
<keyword id="KW-0587">Phenylpropanoid metabolism</keyword>
<keyword id="KW-1185">Reference proteome</keyword>
<dbReference type="EC" id="4.3.1.24" evidence="3"/>
<dbReference type="EMBL" id="CP001037">
    <property type="protein sequence ID" value="ACC80688.1"/>
    <property type="molecule type" value="Genomic_DNA"/>
</dbReference>
<dbReference type="RefSeq" id="WP_012408693.1">
    <property type="nucleotide sequence ID" value="NC_010628.1"/>
</dbReference>
<dbReference type="PDB" id="2NYF">
    <property type="method" value="X-ray"/>
    <property type="resolution" value="2.50 A"/>
    <property type="chains" value="A=1-569"/>
</dbReference>
<dbReference type="PDBsum" id="2NYF"/>
<dbReference type="SMR" id="B2J528"/>
<dbReference type="STRING" id="63737.Npun_R2068"/>
<dbReference type="EnsemblBacteria" id="ACC80688">
    <property type="protein sequence ID" value="ACC80688"/>
    <property type="gene ID" value="Npun_R2068"/>
</dbReference>
<dbReference type="KEGG" id="npu:Npun_R2068"/>
<dbReference type="eggNOG" id="COG2986">
    <property type="taxonomic scope" value="Bacteria"/>
</dbReference>
<dbReference type="HOGENOM" id="CLU_014801_3_2_3"/>
<dbReference type="OrthoDB" id="9806955at2"/>
<dbReference type="PhylomeDB" id="B2J528"/>
<dbReference type="BRENDA" id="4.3.1.24">
    <property type="organism ID" value="4370"/>
</dbReference>
<dbReference type="SABIO-RK" id="B2J528"/>
<dbReference type="UniPathway" id="UPA00713">
    <property type="reaction ID" value="UER00725"/>
</dbReference>
<dbReference type="EvolutionaryTrace" id="B2J528"/>
<dbReference type="Proteomes" id="UP000001191">
    <property type="component" value="Chromosome"/>
</dbReference>
<dbReference type="GO" id="GO:0005737">
    <property type="term" value="C:cytoplasm"/>
    <property type="evidence" value="ECO:0007669"/>
    <property type="project" value="UniProtKB-SubCell"/>
</dbReference>
<dbReference type="GO" id="GO:0045548">
    <property type="term" value="F:phenylalanine ammonia-lyase activity"/>
    <property type="evidence" value="ECO:0000314"/>
    <property type="project" value="UniProtKB"/>
</dbReference>
<dbReference type="GO" id="GO:0009072">
    <property type="term" value="P:aromatic amino acid metabolic process"/>
    <property type="evidence" value="ECO:0000314"/>
    <property type="project" value="UniProtKB"/>
</dbReference>
<dbReference type="GO" id="GO:0009800">
    <property type="term" value="P:cinnamic acid biosynthetic process"/>
    <property type="evidence" value="ECO:0000314"/>
    <property type="project" value="UniProtKB"/>
</dbReference>
<dbReference type="GO" id="GO:0006559">
    <property type="term" value="P:L-phenylalanine catabolic process"/>
    <property type="evidence" value="ECO:0007669"/>
    <property type="project" value="UniProtKB-KW"/>
</dbReference>
<dbReference type="GO" id="GO:0009699">
    <property type="term" value="P:phenylpropanoid biosynthetic process"/>
    <property type="evidence" value="ECO:0000314"/>
    <property type="project" value="UniProtKB"/>
</dbReference>
<dbReference type="GO" id="GO:0051289">
    <property type="term" value="P:protein homotetramerization"/>
    <property type="evidence" value="ECO:0000314"/>
    <property type="project" value="UniProtKB"/>
</dbReference>
<dbReference type="CDD" id="cd00332">
    <property type="entry name" value="PAL-HAL"/>
    <property type="match status" value="1"/>
</dbReference>
<dbReference type="FunFam" id="1.10.275.10:FF:000005">
    <property type="entry name" value="Histidine ammonia-lyase"/>
    <property type="match status" value="1"/>
</dbReference>
<dbReference type="FunFam" id="1.20.200.10:FF:000012">
    <property type="entry name" value="Tyrosine ammonia-lyase"/>
    <property type="match status" value="1"/>
</dbReference>
<dbReference type="Gene3D" id="1.20.200.10">
    <property type="entry name" value="Fumarase/aspartase (Central domain)"/>
    <property type="match status" value="1"/>
</dbReference>
<dbReference type="Gene3D" id="1.10.275.10">
    <property type="entry name" value="Fumarase/aspartase (N-terminal domain)"/>
    <property type="match status" value="1"/>
</dbReference>
<dbReference type="InterPro" id="IPR001106">
    <property type="entry name" value="Aromatic_Lyase"/>
</dbReference>
<dbReference type="InterPro" id="IPR024083">
    <property type="entry name" value="Fumarase/histidase_N"/>
</dbReference>
<dbReference type="InterPro" id="IPR008948">
    <property type="entry name" value="L-Aspartase-like"/>
</dbReference>
<dbReference type="InterPro" id="IPR022313">
    <property type="entry name" value="Phe/His_NH3-lyase_AS"/>
</dbReference>
<dbReference type="PANTHER" id="PTHR10362">
    <property type="entry name" value="HISTIDINE AMMONIA-LYASE"/>
    <property type="match status" value="1"/>
</dbReference>
<dbReference type="Pfam" id="PF00221">
    <property type="entry name" value="Lyase_aromatic"/>
    <property type="match status" value="1"/>
</dbReference>
<dbReference type="SUPFAM" id="SSF48557">
    <property type="entry name" value="L-aspartase-like"/>
    <property type="match status" value="1"/>
</dbReference>
<dbReference type="PROSITE" id="PS00488">
    <property type="entry name" value="PAL_HISTIDASE"/>
    <property type="match status" value="1"/>
</dbReference>
<proteinExistence type="evidence at protein level"/>
<evidence type="ECO:0000250" key="1">
    <source>
        <dbReference type="UniProtKB" id="P11544"/>
    </source>
</evidence>
<evidence type="ECO:0000250" key="2">
    <source>
        <dbReference type="UniProtKB" id="Q68G84"/>
    </source>
</evidence>
<evidence type="ECO:0000269" key="3">
    <source>
    </source>
</evidence>
<evidence type="ECO:0000303" key="4">
    <source>
    </source>
</evidence>
<evidence type="ECO:0000305" key="5"/>
<evidence type="ECO:0007829" key="6">
    <source>
        <dbReference type="PDB" id="2NYF"/>
    </source>
</evidence>
<name>PAL_NOSP7</name>
<organism>
    <name type="scientific">Nostoc punctiforme (strain ATCC 29133 / PCC 73102)</name>
    <dbReference type="NCBI Taxonomy" id="63737"/>
    <lineage>
        <taxon>Bacteria</taxon>
        <taxon>Bacillati</taxon>
        <taxon>Cyanobacteriota</taxon>
        <taxon>Cyanophyceae</taxon>
        <taxon>Nostocales</taxon>
        <taxon>Nostocaceae</taxon>
        <taxon>Nostoc</taxon>
    </lineage>
</organism>
<comment type="function">
    <text evidence="3">Catalyzes the non-oxidative deamination of L-phenylalanine to form trans-cinnamic acid, the first step in the phenylpropanoid pathway.</text>
</comment>
<comment type="catalytic activity">
    <reaction evidence="3">
        <text>L-phenylalanine = (E)-cinnamate + NH4(+)</text>
        <dbReference type="Rhea" id="RHEA:21384"/>
        <dbReference type="ChEBI" id="CHEBI:15669"/>
        <dbReference type="ChEBI" id="CHEBI:28938"/>
        <dbReference type="ChEBI" id="CHEBI:58095"/>
        <dbReference type="EC" id="4.3.1.24"/>
    </reaction>
</comment>
<comment type="biophysicochemical properties">
    <kinetics>
        <KM evidence="3">0.045 mM for phenylalanine</KM>
        <text evidence="3">kcat is 1.96 sec(-1) for phenylalanine.</text>
    </kinetics>
    <phDependence>
        <text evidence="3">Optimum pH is 7.7-8.5.</text>
    </phDependence>
</comment>
<comment type="pathway">
    <text>Phenylpropanoid metabolism; trans-cinnamate biosynthesis; trans-cinnamate from L-phenylalanine: step 1/1.</text>
</comment>
<comment type="subunit">
    <text evidence="3">Homotetramer.</text>
</comment>
<comment type="subcellular location">
    <subcellularLocation>
        <location evidence="5">Cytoplasm</location>
    </subcellularLocation>
</comment>
<comment type="PTM">
    <text evidence="3">Contains an active site 4-methylidene-imidazol-5-one (MIO), which is formed autocatalytically by cyclization and dehydration of residues Ala-Ser-Gly.</text>
</comment>
<comment type="similarity">
    <text evidence="5">Belongs to the PAL/histidase family.</text>
</comment>
<sequence>MNITSLQQNITRSWQIPFTNSSDSIVTVGDRNLTIDEVVNVARHGTQVRLTDNADVIRGVQASCDYINNAVETAQPIYGVTSGFGGMADVVISREQAAELQTNLIWFLKSGAGNKLSLADVRAAMLLRANSHLYGASGIRLELIQRIETFLNAGVTPHVYEFGSIGASGDLVPLSYITGALIGLDPSFTVDFDGKEMDAVTALSRLGLPKLQLQPKEGLAMMNGTSVMTGIAANCVYDAKVLLALTMGVHALAIQGLYGTNQSFHPFIHQCKPHPGQLWTADQMFSLLKDSSLVREELDGKHEYRGKDLIQDRYSLRCLAQFIGPIVDGVSEITKQIEVEMNSVTDNPLIDVENQVSYHGGNFLGQYVGVTMDRLRYYIGLLAKHIDVQIALLVSPEFSNGLPPSLVGNSDRKVNMGLKGLQISGNSIMPLLSFYGNSLADRFPTHAEQFNQNINSQGYISANLTRRSVDIFQNYMAIALMFGVQAVDLRTYKMKGHYDARTCLSPNTVQLYTAVCEVVGKPLTSVRPYIWNDNEQCLDEHIARISADIAGGGLIVQAVEHIFSSLKST</sequence>
<protein>
    <recommendedName>
        <fullName evidence="4">Phenylalanine ammonia-lyase</fullName>
        <ecNumber evidence="3">4.3.1.24</ecNumber>
    </recommendedName>
</protein>
<feature type="chain" id="PRO_0000429967" description="Phenylalanine ammonia-lyase">
    <location>
        <begin position="1"/>
        <end position="569"/>
    </location>
</feature>
<feature type="active site" description="Proton donor/acceptor" evidence="2">
    <location>
        <position position="78"/>
    </location>
</feature>
<feature type="binding site" evidence="2">
    <location>
        <position position="223"/>
    </location>
    <ligand>
        <name>(E)-cinnamate</name>
        <dbReference type="ChEBI" id="CHEBI:15669"/>
    </ligand>
</feature>
<feature type="binding site" evidence="2">
    <location>
        <position position="311"/>
    </location>
    <ligand>
        <name>(E)-cinnamate</name>
        <dbReference type="ChEBI" id="CHEBI:15669"/>
    </ligand>
</feature>
<feature type="binding site" evidence="2">
    <location>
        <position position="317"/>
    </location>
    <ligand>
        <name>(E)-cinnamate</name>
        <dbReference type="ChEBI" id="CHEBI:15669"/>
    </ligand>
</feature>
<feature type="binding site" evidence="2">
    <location>
        <position position="347"/>
    </location>
    <ligand>
        <name>(E)-cinnamate</name>
        <dbReference type="ChEBI" id="CHEBI:15669"/>
    </ligand>
</feature>
<feature type="binding site" evidence="1">
    <location>
        <position position="419"/>
    </location>
    <ligand>
        <name>(E)-cinnamate</name>
        <dbReference type="ChEBI" id="CHEBI:15669"/>
    </ligand>
</feature>
<feature type="binding site" evidence="1">
    <location>
        <position position="448"/>
    </location>
    <ligand>
        <name>(E)-cinnamate</name>
        <dbReference type="ChEBI" id="CHEBI:15669"/>
    </ligand>
</feature>
<feature type="binding site" evidence="2">
    <location>
        <position position="451"/>
    </location>
    <ligand>
        <name>(E)-cinnamate</name>
        <dbReference type="ChEBI" id="CHEBI:15669"/>
    </ligand>
</feature>
<feature type="modified residue" description="2,3-didehydroalanine (Ser)" evidence="3">
    <location>
        <position position="168"/>
    </location>
</feature>
<feature type="cross-link" description="5-imidazolinone (Ala-Gly)" evidence="3">
    <location>
        <begin position="167"/>
        <end position="169"/>
    </location>
</feature>
<feature type="strand" evidence="6">
    <location>
        <begin position="25"/>
        <end position="31"/>
    </location>
</feature>
<feature type="helix" evidence="6">
    <location>
        <begin position="35"/>
        <end position="43"/>
    </location>
</feature>
<feature type="strand" evidence="6">
    <location>
        <begin position="47"/>
        <end position="50"/>
    </location>
</feature>
<feature type="helix" evidence="6">
    <location>
        <begin position="54"/>
        <end position="73"/>
    </location>
</feature>
<feature type="helix" evidence="6">
    <location>
        <begin position="94"/>
        <end position="107"/>
    </location>
</feature>
<feature type="strand" evidence="6">
    <location>
        <begin position="112"/>
        <end position="115"/>
    </location>
</feature>
<feature type="helix" evidence="6">
    <location>
        <begin position="118"/>
        <end position="132"/>
    </location>
</feature>
<feature type="helix" evidence="6">
    <location>
        <begin position="141"/>
        <end position="153"/>
    </location>
</feature>
<feature type="strand" evidence="6">
    <location>
        <begin position="155"/>
        <end position="157"/>
    </location>
</feature>
<feature type="strand" evidence="6">
    <location>
        <begin position="160"/>
        <end position="163"/>
    </location>
</feature>
<feature type="helix" evidence="6">
    <location>
        <begin position="171"/>
        <end position="181"/>
    </location>
</feature>
<feature type="strand" evidence="6">
    <location>
        <begin position="188"/>
        <end position="192"/>
    </location>
</feature>
<feature type="strand" evidence="6">
    <location>
        <begin position="195"/>
        <end position="198"/>
    </location>
</feature>
<feature type="helix" evidence="6">
    <location>
        <begin position="199"/>
        <end position="205"/>
    </location>
</feature>
<feature type="helix" evidence="6">
    <location>
        <begin position="217"/>
        <end position="222"/>
    </location>
</feature>
<feature type="strand" evidence="6">
    <location>
        <begin position="223"/>
        <end position="225"/>
    </location>
</feature>
<feature type="helix" evidence="6">
    <location>
        <begin position="226"/>
        <end position="256"/>
    </location>
</feature>
<feature type="helix" evidence="6">
    <location>
        <begin position="262"/>
        <end position="264"/>
    </location>
</feature>
<feature type="helix" evidence="6">
    <location>
        <begin position="266"/>
        <end position="269"/>
    </location>
</feature>
<feature type="helix" evidence="6">
    <location>
        <begin position="275"/>
        <end position="287"/>
    </location>
</feature>
<feature type="turn" evidence="6">
    <location>
        <begin position="288"/>
        <end position="290"/>
    </location>
</feature>
<feature type="strand" evidence="6">
    <location>
        <begin position="292"/>
        <end position="294"/>
    </location>
</feature>
<feature type="helix" evidence="6">
    <location>
        <begin position="314"/>
        <end position="317"/>
    </location>
</feature>
<feature type="helix" evidence="6">
    <location>
        <begin position="319"/>
        <end position="341"/>
    </location>
</feature>
<feature type="strand" evidence="6">
    <location>
        <begin position="346"/>
        <end position="351"/>
    </location>
</feature>
<feature type="helix" evidence="6">
    <location>
        <begin position="352"/>
        <end position="354"/>
    </location>
</feature>
<feature type="strand" evidence="6">
    <location>
        <begin position="356"/>
        <end position="358"/>
    </location>
</feature>
<feature type="helix" evidence="6">
    <location>
        <begin position="366"/>
        <end position="394"/>
    </location>
</feature>
<feature type="turn" evidence="6">
    <location>
        <begin position="396"/>
        <end position="400"/>
    </location>
</feature>
<feature type="helix" evidence="6">
    <location>
        <begin position="404"/>
        <end position="406"/>
    </location>
</feature>
<feature type="strand" evidence="6">
    <location>
        <begin position="412"/>
        <end position="414"/>
    </location>
</feature>
<feature type="helix" evidence="6">
    <location>
        <begin position="419"/>
        <end position="435"/>
    </location>
</feature>
<feature type="helix" evidence="6">
    <location>
        <begin position="440"/>
        <end position="442"/>
    </location>
</feature>
<feature type="turn" evidence="6">
    <location>
        <begin position="445"/>
        <end position="452"/>
    </location>
</feature>
<feature type="helix" evidence="6">
    <location>
        <begin position="458"/>
        <end position="495"/>
    </location>
</feature>
<feature type="helix" evidence="6">
    <location>
        <begin position="500"/>
        <end position="502"/>
    </location>
</feature>
<feature type="helix" evidence="6">
    <location>
        <begin position="506"/>
        <end position="519"/>
    </location>
</feature>
<feature type="helix" evidence="6">
    <location>
        <begin position="533"/>
        <end position="535"/>
    </location>
</feature>
<feature type="helix" evidence="6">
    <location>
        <begin position="538"/>
        <end position="551"/>
    </location>
</feature>
<feature type="helix" evidence="6">
    <location>
        <begin position="554"/>
        <end position="557"/>
    </location>
</feature>
<feature type="helix" evidence="6">
    <location>
        <begin position="560"/>
        <end position="563"/>
    </location>
</feature>